<protein>
    <recommendedName>
        <fullName evidence="3">[Thr6]-Phyllokinin</fullName>
    </recommendedName>
</protein>
<keyword id="KW-0878">Amphibian defense peptide</keyword>
<keyword id="KW-0903">Direct protein sequencing</keyword>
<keyword id="KW-1213">G-protein coupled receptor impairing toxin</keyword>
<keyword id="KW-0964">Secreted</keyword>
<keyword id="KW-0765">Sulfation</keyword>
<keyword id="KW-0800">Toxin</keyword>
<keyword id="KW-0838">Vasoactive</keyword>
<keyword id="KW-0840">Vasodilator</keyword>
<sequence length="11" mass="1351">RPPGFTPFRIY</sequence>
<reference evidence="4" key="1">
    <citation type="journal article" date="2011" name="Toxicon">
        <title>Peptidomic dissection of the skin secretion of Phasmahyla jandaia (Bokermann and Sazima, 1978) (Anura, Hylidae, Phyllomedusinae).</title>
        <authorList>
            <person name="Rates B."/>
            <person name="Silva L.P."/>
            <person name="Ireno I.C."/>
            <person name="Leite F.S."/>
            <person name="Borges M.H."/>
            <person name="Bloch C. Jr."/>
            <person name="De Lima M.E."/>
            <person name="Pimenta A.M."/>
        </authorList>
    </citation>
    <scope>PROTEIN SEQUENCE</scope>
    <scope>SUBCELLULAR LOCATION</scope>
    <scope>TISSUE SPECIFICITY</scope>
    <scope>MASS SPECTROMETRY</scope>
    <scope>SULFATION AT TYR-11</scope>
    <source>
        <tissue evidence="2">Skin secretion</tissue>
    </source>
</reference>
<proteinExistence type="evidence at protein level"/>
<name>BRKP2_PHAJA</name>
<accession>P86632</accession>
<feature type="peptide" id="PRO_0000404635" description="[Thr6]-Phyllokinin" evidence="2">
    <location>
        <begin position="1"/>
        <end position="11"/>
    </location>
</feature>
<feature type="modified residue" description="Sulfotyrosine; partial" evidence="2">
    <location>
        <position position="11"/>
    </location>
</feature>
<feature type="unsure residue" description="I or L" evidence="2">
    <location>
        <position position="10"/>
    </location>
</feature>
<dbReference type="GO" id="GO:0005576">
    <property type="term" value="C:extracellular region"/>
    <property type="evidence" value="ECO:0007669"/>
    <property type="project" value="UniProtKB-SubCell"/>
</dbReference>
<dbReference type="GO" id="GO:0090729">
    <property type="term" value="F:toxin activity"/>
    <property type="evidence" value="ECO:0007669"/>
    <property type="project" value="UniProtKB-KW"/>
</dbReference>
<dbReference type="GO" id="GO:0006952">
    <property type="term" value="P:defense response"/>
    <property type="evidence" value="ECO:0007669"/>
    <property type="project" value="UniProtKB-KW"/>
</dbReference>
<dbReference type="GO" id="GO:0042311">
    <property type="term" value="P:vasodilation"/>
    <property type="evidence" value="ECO:0007669"/>
    <property type="project" value="UniProtKB-KW"/>
</dbReference>
<evidence type="ECO:0000250" key="1"/>
<evidence type="ECO:0000269" key="2">
    <source>
    </source>
</evidence>
<evidence type="ECO:0000303" key="3">
    <source>
    </source>
</evidence>
<evidence type="ECO:0000305" key="4"/>
<comment type="function">
    <text evidence="1">May produce in vitro relaxation of rat arterial smooth muscle and constriction of intestinal smooth muscle (By similarity). May target bradykinin receptors (BDKRB).</text>
</comment>
<comment type="subcellular location">
    <subcellularLocation>
        <location evidence="2">Secreted</location>
    </subcellularLocation>
</comment>
<comment type="tissue specificity">
    <text evidence="2">Expressed by the skin glands.</text>
</comment>
<comment type="mass spectrometry" mass="1429.8" method="MALDI" evidence="2">
    <text>Sulfated.</text>
</comment>
<comment type="mass spectrometry" mass="1349.8" method="MALDI" evidence="2"/>
<comment type="similarity">
    <text evidence="4">Belongs to the bradykinin-related peptide family.</text>
</comment>
<organism>
    <name type="scientific">Phasmahyla jandaia</name>
    <name type="common">Jandaia leaf frog</name>
    <name type="synonym">Phyllomedusa jandaia</name>
    <dbReference type="NCBI Taxonomy" id="762504"/>
    <lineage>
        <taxon>Eukaryota</taxon>
        <taxon>Metazoa</taxon>
        <taxon>Chordata</taxon>
        <taxon>Craniata</taxon>
        <taxon>Vertebrata</taxon>
        <taxon>Euteleostomi</taxon>
        <taxon>Amphibia</taxon>
        <taxon>Batrachia</taxon>
        <taxon>Anura</taxon>
        <taxon>Neobatrachia</taxon>
        <taxon>Hyloidea</taxon>
        <taxon>Hylidae</taxon>
        <taxon>Phyllomedusinae</taxon>
        <taxon>Phasmahyla</taxon>
    </lineage>
</organism>